<gene>
    <name evidence="1" type="primary">rplF</name>
    <name type="ordered locus">Deide_18800</name>
</gene>
<dbReference type="EMBL" id="CP001114">
    <property type="protein sequence ID" value="ACO46868.1"/>
    <property type="molecule type" value="Genomic_DNA"/>
</dbReference>
<dbReference type="RefSeq" id="WP_012693990.1">
    <property type="nucleotide sequence ID" value="NC_012526.1"/>
</dbReference>
<dbReference type="SMR" id="C1CXF1"/>
<dbReference type="STRING" id="546414.Deide_18800"/>
<dbReference type="PaxDb" id="546414-Deide_18800"/>
<dbReference type="KEGG" id="ddr:Deide_18800"/>
<dbReference type="eggNOG" id="COG0097">
    <property type="taxonomic scope" value="Bacteria"/>
</dbReference>
<dbReference type="HOGENOM" id="CLU_065464_1_2_0"/>
<dbReference type="OrthoDB" id="9805007at2"/>
<dbReference type="Proteomes" id="UP000002208">
    <property type="component" value="Chromosome"/>
</dbReference>
<dbReference type="GO" id="GO:0022625">
    <property type="term" value="C:cytosolic large ribosomal subunit"/>
    <property type="evidence" value="ECO:0007669"/>
    <property type="project" value="TreeGrafter"/>
</dbReference>
<dbReference type="GO" id="GO:0019843">
    <property type="term" value="F:rRNA binding"/>
    <property type="evidence" value="ECO:0007669"/>
    <property type="project" value="UniProtKB-UniRule"/>
</dbReference>
<dbReference type="GO" id="GO:0003735">
    <property type="term" value="F:structural constituent of ribosome"/>
    <property type="evidence" value="ECO:0007669"/>
    <property type="project" value="InterPro"/>
</dbReference>
<dbReference type="GO" id="GO:0002181">
    <property type="term" value="P:cytoplasmic translation"/>
    <property type="evidence" value="ECO:0007669"/>
    <property type="project" value="TreeGrafter"/>
</dbReference>
<dbReference type="FunFam" id="3.90.930.12:FF:000001">
    <property type="entry name" value="50S ribosomal protein L6"/>
    <property type="match status" value="1"/>
</dbReference>
<dbReference type="FunFam" id="3.90.930.12:FF:000002">
    <property type="entry name" value="50S ribosomal protein L6"/>
    <property type="match status" value="1"/>
</dbReference>
<dbReference type="Gene3D" id="3.90.930.12">
    <property type="entry name" value="Ribosomal protein L6, alpha-beta domain"/>
    <property type="match status" value="2"/>
</dbReference>
<dbReference type="HAMAP" id="MF_01365_B">
    <property type="entry name" value="Ribosomal_uL6_B"/>
    <property type="match status" value="1"/>
</dbReference>
<dbReference type="InterPro" id="IPR000702">
    <property type="entry name" value="Ribosomal_uL6-like"/>
</dbReference>
<dbReference type="InterPro" id="IPR036789">
    <property type="entry name" value="Ribosomal_uL6-like_a/b-dom_sf"/>
</dbReference>
<dbReference type="InterPro" id="IPR020040">
    <property type="entry name" value="Ribosomal_uL6_a/b-dom"/>
</dbReference>
<dbReference type="InterPro" id="IPR019906">
    <property type="entry name" value="Ribosomal_uL6_bac-type"/>
</dbReference>
<dbReference type="NCBIfam" id="TIGR03654">
    <property type="entry name" value="L6_bact"/>
    <property type="match status" value="1"/>
</dbReference>
<dbReference type="PANTHER" id="PTHR11655">
    <property type="entry name" value="60S/50S RIBOSOMAL PROTEIN L6/L9"/>
    <property type="match status" value="1"/>
</dbReference>
<dbReference type="PANTHER" id="PTHR11655:SF14">
    <property type="entry name" value="LARGE RIBOSOMAL SUBUNIT PROTEIN UL6M"/>
    <property type="match status" value="1"/>
</dbReference>
<dbReference type="Pfam" id="PF00347">
    <property type="entry name" value="Ribosomal_L6"/>
    <property type="match status" value="2"/>
</dbReference>
<dbReference type="PIRSF" id="PIRSF002162">
    <property type="entry name" value="Ribosomal_L6"/>
    <property type="match status" value="1"/>
</dbReference>
<dbReference type="PRINTS" id="PR00059">
    <property type="entry name" value="RIBOSOMALL6"/>
</dbReference>
<dbReference type="SUPFAM" id="SSF56053">
    <property type="entry name" value="Ribosomal protein L6"/>
    <property type="match status" value="2"/>
</dbReference>
<comment type="function">
    <text evidence="1">This protein binds to the 23S rRNA, and is important in its secondary structure. It is located near the subunit interface in the base of the L7/L12 stalk, and near the tRNA binding site of the peptidyltransferase center.</text>
</comment>
<comment type="subunit">
    <text evidence="1">Part of the 50S ribosomal subunit.</text>
</comment>
<comment type="similarity">
    <text evidence="1">Belongs to the universal ribosomal protein uL6 family.</text>
</comment>
<evidence type="ECO:0000255" key="1">
    <source>
        <dbReference type="HAMAP-Rule" id="MF_01365"/>
    </source>
</evidence>
<evidence type="ECO:0000305" key="2"/>
<reference key="1">
    <citation type="journal article" date="2009" name="PLoS Genet.">
        <title>Alliance of proteomics and genomics to unravel the specificities of Sahara bacterium Deinococcus deserti.</title>
        <authorList>
            <person name="de Groot A."/>
            <person name="Dulermo R."/>
            <person name="Ortet P."/>
            <person name="Blanchard L."/>
            <person name="Guerin P."/>
            <person name="Fernandez B."/>
            <person name="Vacherie B."/>
            <person name="Dossat C."/>
            <person name="Jolivet E."/>
            <person name="Siguier P."/>
            <person name="Chandler M."/>
            <person name="Barakat M."/>
            <person name="Dedieu A."/>
            <person name="Barbe V."/>
            <person name="Heulin T."/>
            <person name="Sommer S."/>
            <person name="Achouak W."/>
            <person name="Armengaud J."/>
        </authorList>
    </citation>
    <scope>NUCLEOTIDE SEQUENCE [LARGE SCALE GENOMIC DNA]</scope>
    <source>
        <strain>DSM 17065 / CIP 109153 / LMG 22923 / VCD115</strain>
    </source>
</reference>
<name>RL6_DEIDV</name>
<feature type="chain" id="PRO_1000214921" description="Large ribosomal subunit protein uL6">
    <location>
        <begin position="1"/>
        <end position="185"/>
    </location>
</feature>
<accession>C1CXF1</accession>
<keyword id="KW-1185">Reference proteome</keyword>
<keyword id="KW-0687">Ribonucleoprotein</keyword>
<keyword id="KW-0689">Ribosomal protein</keyword>
<keyword id="KW-0694">RNA-binding</keyword>
<keyword id="KW-0699">rRNA-binding</keyword>
<proteinExistence type="inferred from homology"/>
<sequence>MSRIGKQPIAVPSGVTVNTQSGVFKVKGPKGELTVPFNPDLTIREDNGQLLVERPSDRQEHRALHGLTRTLVANAVKGVSDGFVINLELRGVGYRAKLNGKALELTIGYSHPVVIDPPAGVTFAVPEPTKIDVSGIDKQLVGQVAANVREVRKPDAYHGKGVRFVGQQIALKAGKAGATGGKGKK</sequence>
<protein>
    <recommendedName>
        <fullName evidence="1">Large ribosomal subunit protein uL6</fullName>
    </recommendedName>
    <alternativeName>
        <fullName evidence="2">50S ribosomal protein L6</fullName>
    </alternativeName>
</protein>
<organism>
    <name type="scientific">Deinococcus deserti (strain DSM 17065 / CIP 109153 / LMG 22923 / VCD115)</name>
    <dbReference type="NCBI Taxonomy" id="546414"/>
    <lineage>
        <taxon>Bacteria</taxon>
        <taxon>Thermotogati</taxon>
        <taxon>Deinococcota</taxon>
        <taxon>Deinococci</taxon>
        <taxon>Deinococcales</taxon>
        <taxon>Deinococcaceae</taxon>
        <taxon>Deinococcus</taxon>
    </lineage>
</organism>